<feature type="chain" id="PRO_0000266065" description="CTP synthase">
    <location>
        <begin position="1"/>
        <end position="542"/>
    </location>
</feature>
<feature type="domain" description="Glutamine amidotransferase type-1" evidence="1">
    <location>
        <begin position="291"/>
        <end position="541"/>
    </location>
</feature>
<feature type="region of interest" description="Amidoligase domain" evidence="1">
    <location>
        <begin position="1"/>
        <end position="265"/>
    </location>
</feature>
<feature type="active site" description="Nucleophile; for glutamine hydrolysis" evidence="1">
    <location>
        <position position="380"/>
    </location>
</feature>
<feature type="active site" evidence="1">
    <location>
        <position position="514"/>
    </location>
</feature>
<feature type="active site" evidence="1">
    <location>
        <position position="516"/>
    </location>
</feature>
<feature type="binding site" evidence="1">
    <location>
        <position position="13"/>
    </location>
    <ligand>
        <name>CTP</name>
        <dbReference type="ChEBI" id="CHEBI:37563"/>
        <note>allosteric inhibitor</note>
    </ligand>
</feature>
<feature type="binding site" evidence="1">
    <location>
        <position position="13"/>
    </location>
    <ligand>
        <name>UTP</name>
        <dbReference type="ChEBI" id="CHEBI:46398"/>
    </ligand>
</feature>
<feature type="binding site" evidence="1">
    <location>
        <begin position="14"/>
        <end position="19"/>
    </location>
    <ligand>
        <name>ATP</name>
        <dbReference type="ChEBI" id="CHEBI:30616"/>
    </ligand>
</feature>
<feature type="binding site" evidence="1">
    <location>
        <position position="54"/>
    </location>
    <ligand>
        <name>L-glutamine</name>
        <dbReference type="ChEBI" id="CHEBI:58359"/>
    </ligand>
</feature>
<feature type="binding site" evidence="1">
    <location>
        <position position="71"/>
    </location>
    <ligand>
        <name>ATP</name>
        <dbReference type="ChEBI" id="CHEBI:30616"/>
    </ligand>
</feature>
<feature type="binding site" evidence="1">
    <location>
        <position position="71"/>
    </location>
    <ligand>
        <name>Mg(2+)</name>
        <dbReference type="ChEBI" id="CHEBI:18420"/>
    </ligand>
</feature>
<feature type="binding site" evidence="1">
    <location>
        <position position="139"/>
    </location>
    <ligand>
        <name>Mg(2+)</name>
        <dbReference type="ChEBI" id="CHEBI:18420"/>
    </ligand>
</feature>
<feature type="binding site" evidence="1">
    <location>
        <begin position="146"/>
        <end position="148"/>
    </location>
    <ligand>
        <name>CTP</name>
        <dbReference type="ChEBI" id="CHEBI:37563"/>
        <note>allosteric inhibitor</note>
    </ligand>
</feature>
<feature type="binding site" evidence="1">
    <location>
        <begin position="186"/>
        <end position="191"/>
    </location>
    <ligand>
        <name>CTP</name>
        <dbReference type="ChEBI" id="CHEBI:37563"/>
        <note>allosteric inhibitor</note>
    </ligand>
</feature>
<feature type="binding site" evidence="1">
    <location>
        <begin position="186"/>
        <end position="191"/>
    </location>
    <ligand>
        <name>UTP</name>
        <dbReference type="ChEBI" id="CHEBI:46398"/>
    </ligand>
</feature>
<feature type="binding site" evidence="1">
    <location>
        <position position="222"/>
    </location>
    <ligand>
        <name>CTP</name>
        <dbReference type="ChEBI" id="CHEBI:37563"/>
        <note>allosteric inhibitor</note>
    </ligand>
</feature>
<feature type="binding site" evidence="1">
    <location>
        <position position="222"/>
    </location>
    <ligand>
        <name>UTP</name>
        <dbReference type="ChEBI" id="CHEBI:46398"/>
    </ligand>
</feature>
<feature type="binding site" evidence="1">
    <location>
        <position position="353"/>
    </location>
    <ligand>
        <name>L-glutamine</name>
        <dbReference type="ChEBI" id="CHEBI:58359"/>
    </ligand>
</feature>
<feature type="binding site" evidence="1">
    <location>
        <begin position="381"/>
        <end position="384"/>
    </location>
    <ligand>
        <name>L-glutamine</name>
        <dbReference type="ChEBI" id="CHEBI:58359"/>
    </ligand>
</feature>
<feature type="binding site" evidence="1">
    <location>
        <position position="404"/>
    </location>
    <ligand>
        <name>L-glutamine</name>
        <dbReference type="ChEBI" id="CHEBI:58359"/>
    </ligand>
</feature>
<feature type="binding site" evidence="1">
    <location>
        <position position="469"/>
    </location>
    <ligand>
        <name>L-glutamine</name>
        <dbReference type="ChEBI" id="CHEBI:58359"/>
    </ligand>
</feature>
<proteinExistence type="inferred from homology"/>
<reference key="1">
    <citation type="journal article" date="2004" name="Proc. Natl. Acad. Sci. U.S.A.">
        <title>The louse-borne human pathogen Bartonella quintana is a genomic derivative of the zoonotic agent Bartonella henselae.</title>
        <authorList>
            <person name="Alsmark U.C.M."/>
            <person name="Frank A.C."/>
            <person name="Karlberg E.O."/>
            <person name="Legault B.-A."/>
            <person name="Ardell D.H."/>
            <person name="Canbaeck B."/>
            <person name="Eriksson A.-S."/>
            <person name="Naeslund A.K."/>
            <person name="Handley S.A."/>
            <person name="Huvet M."/>
            <person name="La Scola B."/>
            <person name="Holmberg M."/>
            <person name="Andersson S.G.E."/>
        </authorList>
    </citation>
    <scope>NUCLEOTIDE SEQUENCE [LARGE SCALE GENOMIC DNA]</scope>
    <source>
        <strain>ATCC 49882 / DSM 28221 / CCUG 30454 / Houston 1</strain>
    </source>
</reference>
<organism>
    <name type="scientific">Bartonella henselae (strain ATCC 49882 / DSM 28221 / CCUG 30454 / Houston 1)</name>
    <name type="common">Rochalimaea henselae</name>
    <dbReference type="NCBI Taxonomy" id="283166"/>
    <lineage>
        <taxon>Bacteria</taxon>
        <taxon>Pseudomonadati</taxon>
        <taxon>Pseudomonadota</taxon>
        <taxon>Alphaproteobacteria</taxon>
        <taxon>Hyphomicrobiales</taxon>
        <taxon>Bartonellaceae</taxon>
        <taxon>Bartonella</taxon>
    </lineage>
</organism>
<name>PYRG_BARHE</name>
<accession>Q6G410</accession>
<protein>
    <recommendedName>
        <fullName evidence="1">CTP synthase</fullName>
        <ecNumber evidence="1">6.3.4.2</ecNumber>
    </recommendedName>
    <alternativeName>
        <fullName evidence="1">Cytidine 5'-triphosphate synthase</fullName>
    </alternativeName>
    <alternativeName>
        <fullName evidence="1">Cytidine triphosphate synthetase</fullName>
        <shortName evidence="1">CTP synthetase</shortName>
        <shortName evidence="1">CTPS</shortName>
    </alternativeName>
    <alternativeName>
        <fullName evidence="1">UTP--ammonia ligase</fullName>
    </alternativeName>
</protein>
<sequence>MARYVFITGGVVSSLGKGIAAAALAALLQARGYSVRLRKLDPYLNVDPGTMSPYQHGEVFVTDDGAETDLDLGHYERFTGRSANSQDNITTGRIYRNIIERERRGDYLGATVQVIPHVTDEIKRFITTGNEEFDFVLCEIGGTVGDIEAMPFLEAIRQLHNELPRQNVIYVHLTLMPYISSAGELKTKPTQHSVKELQSVGIAPDILLVRADRPIPETERSKLSLFCNVRPTAVIQALDMPTIYDVPIAYHKEGLDSEVLSAFGMHPAHKPNMDRWEDITHRIHHPEGEVTIAVVGKYTGLKDAYKSLTEAIAHGGLANKVKVNIEWIDAELFEREDPTSTLRKVHGILVPGAFGVRGAEGKMRAIQFARERRVPFFGICFGMQLACIEAARNIAQIENASSSEFCETKNPIVGLMTEWLKGDVLEKRTKCGNFGGTMRLGAFAAELKENSHIAQIYGMTRIYERHRHRYEVNIDYKDKLEQCGLVFSGMSPDGVLPETIEYADHPWFIGVQYHPELKSRPFDPHPLFSSFIEATVEQSRLV</sequence>
<keyword id="KW-0067">ATP-binding</keyword>
<keyword id="KW-0315">Glutamine amidotransferase</keyword>
<keyword id="KW-0436">Ligase</keyword>
<keyword id="KW-0460">Magnesium</keyword>
<keyword id="KW-0479">Metal-binding</keyword>
<keyword id="KW-0547">Nucleotide-binding</keyword>
<keyword id="KW-0665">Pyrimidine biosynthesis</keyword>
<dbReference type="EC" id="6.3.4.2" evidence="1"/>
<dbReference type="EMBL" id="BX897699">
    <property type="protein sequence ID" value="CAF27378.1"/>
    <property type="molecule type" value="Genomic_DNA"/>
</dbReference>
<dbReference type="RefSeq" id="WP_011180499.1">
    <property type="nucleotide sequence ID" value="NZ_LRIJ02000001.1"/>
</dbReference>
<dbReference type="SMR" id="Q6G410"/>
<dbReference type="PaxDb" id="283166-BH05700"/>
<dbReference type="EnsemblBacteria" id="CAF27378">
    <property type="protein sequence ID" value="CAF27378"/>
    <property type="gene ID" value="BH05700"/>
</dbReference>
<dbReference type="KEGG" id="bhe:BH05700"/>
<dbReference type="eggNOG" id="COG0504">
    <property type="taxonomic scope" value="Bacteria"/>
</dbReference>
<dbReference type="OrthoDB" id="9801107at2"/>
<dbReference type="UniPathway" id="UPA00159">
    <property type="reaction ID" value="UER00277"/>
</dbReference>
<dbReference type="Proteomes" id="UP000000421">
    <property type="component" value="Chromosome"/>
</dbReference>
<dbReference type="GO" id="GO:0005829">
    <property type="term" value="C:cytosol"/>
    <property type="evidence" value="ECO:0007669"/>
    <property type="project" value="TreeGrafter"/>
</dbReference>
<dbReference type="GO" id="GO:0005524">
    <property type="term" value="F:ATP binding"/>
    <property type="evidence" value="ECO:0007669"/>
    <property type="project" value="UniProtKB-KW"/>
</dbReference>
<dbReference type="GO" id="GO:0003883">
    <property type="term" value="F:CTP synthase activity"/>
    <property type="evidence" value="ECO:0007669"/>
    <property type="project" value="UniProtKB-UniRule"/>
</dbReference>
<dbReference type="GO" id="GO:0004359">
    <property type="term" value="F:glutaminase activity"/>
    <property type="evidence" value="ECO:0007669"/>
    <property type="project" value="RHEA"/>
</dbReference>
<dbReference type="GO" id="GO:0042802">
    <property type="term" value="F:identical protein binding"/>
    <property type="evidence" value="ECO:0007669"/>
    <property type="project" value="TreeGrafter"/>
</dbReference>
<dbReference type="GO" id="GO:0046872">
    <property type="term" value="F:metal ion binding"/>
    <property type="evidence" value="ECO:0007669"/>
    <property type="project" value="UniProtKB-KW"/>
</dbReference>
<dbReference type="GO" id="GO:0044210">
    <property type="term" value="P:'de novo' CTP biosynthetic process"/>
    <property type="evidence" value="ECO:0007669"/>
    <property type="project" value="UniProtKB-UniRule"/>
</dbReference>
<dbReference type="GO" id="GO:0019856">
    <property type="term" value="P:pyrimidine nucleobase biosynthetic process"/>
    <property type="evidence" value="ECO:0007669"/>
    <property type="project" value="TreeGrafter"/>
</dbReference>
<dbReference type="CDD" id="cd03113">
    <property type="entry name" value="CTPS_N"/>
    <property type="match status" value="1"/>
</dbReference>
<dbReference type="CDD" id="cd01746">
    <property type="entry name" value="GATase1_CTP_Synthase"/>
    <property type="match status" value="1"/>
</dbReference>
<dbReference type="FunFam" id="3.40.50.300:FF:000009">
    <property type="entry name" value="CTP synthase"/>
    <property type="match status" value="1"/>
</dbReference>
<dbReference type="FunFam" id="3.40.50.880:FF:000002">
    <property type="entry name" value="CTP synthase"/>
    <property type="match status" value="1"/>
</dbReference>
<dbReference type="Gene3D" id="3.40.50.880">
    <property type="match status" value="1"/>
</dbReference>
<dbReference type="Gene3D" id="3.40.50.300">
    <property type="entry name" value="P-loop containing nucleotide triphosphate hydrolases"/>
    <property type="match status" value="1"/>
</dbReference>
<dbReference type="HAMAP" id="MF_01227">
    <property type="entry name" value="PyrG"/>
    <property type="match status" value="1"/>
</dbReference>
<dbReference type="InterPro" id="IPR029062">
    <property type="entry name" value="Class_I_gatase-like"/>
</dbReference>
<dbReference type="InterPro" id="IPR004468">
    <property type="entry name" value="CTP_synthase"/>
</dbReference>
<dbReference type="InterPro" id="IPR017456">
    <property type="entry name" value="CTP_synthase_N"/>
</dbReference>
<dbReference type="InterPro" id="IPR017926">
    <property type="entry name" value="GATASE"/>
</dbReference>
<dbReference type="InterPro" id="IPR033828">
    <property type="entry name" value="GATase1_CTP_Synthase"/>
</dbReference>
<dbReference type="InterPro" id="IPR027417">
    <property type="entry name" value="P-loop_NTPase"/>
</dbReference>
<dbReference type="NCBIfam" id="NF003792">
    <property type="entry name" value="PRK05380.1"/>
    <property type="match status" value="1"/>
</dbReference>
<dbReference type="NCBIfam" id="TIGR00337">
    <property type="entry name" value="PyrG"/>
    <property type="match status" value="1"/>
</dbReference>
<dbReference type="PANTHER" id="PTHR11550">
    <property type="entry name" value="CTP SYNTHASE"/>
    <property type="match status" value="1"/>
</dbReference>
<dbReference type="PANTHER" id="PTHR11550:SF0">
    <property type="entry name" value="CTP SYNTHASE-RELATED"/>
    <property type="match status" value="1"/>
</dbReference>
<dbReference type="Pfam" id="PF06418">
    <property type="entry name" value="CTP_synth_N"/>
    <property type="match status" value="1"/>
</dbReference>
<dbReference type="Pfam" id="PF00117">
    <property type="entry name" value="GATase"/>
    <property type="match status" value="1"/>
</dbReference>
<dbReference type="SUPFAM" id="SSF52317">
    <property type="entry name" value="Class I glutamine amidotransferase-like"/>
    <property type="match status" value="1"/>
</dbReference>
<dbReference type="SUPFAM" id="SSF52540">
    <property type="entry name" value="P-loop containing nucleoside triphosphate hydrolases"/>
    <property type="match status" value="1"/>
</dbReference>
<dbReference type="PROSITE" id="PS51273">
    <property type="entry name" value="GATASE_TYPE_1"/>
    <property type="match status" value="1"/>
</dbReference>
<gene>
    <name evidence="1" type="primary">pyrG</name>
    <name type="ordered locus">BH05700</name>
</gene>
<evidence type="ECO:0000255" key="1">
    <source>
        <dbReference type="HAMAP-Rule" id="MF_01227"/>
    </source>
</evidence>
<comment type="function">
    <text evidence="1">Catalyzes the ATP-dependent amination of UTP to CTP with either L-glutamine or ammonia as the source of nitrogen. Regulates intracellular CTP levels through interactions with the four ribonucleotide triphosphates.</text>
</comment>
<comment type="catalytic activity">
    <reaction evidence="1">
        <text>UTP + L-glutamine + ATP + H2O = CTP + L-glutamate + ADP + phosphate + 2 H(+)</text>
        <dbReference type="Rhea" id="RHEA:26426"/>
        <dbReference type="ChEBI" id="CHEBI:15377"/>
        <dbReference type="ChEBI" id="CHEBI:15378"/>
        <dbReference type="ChEBI" id="CHEBI:29985"/>
        <dbReference type="ChEBI" id="CHEBI:30616"/>
        <dbReference type="ChEBI" id="CHEBI:37563"/>
        <dbReference type="ChEBI" id="CHEBI:43474"/>
        <dbReference type="ChEBI" id="CHEBI:46398"/>
        <dbReference type="ChEBI" id="CHEBI:58359"/>
        <dbReference type="ChEBI" id="CHEBI:456216"/>
        <dbReference type="EC" id="6.3.4.2"/>
    </reaction>
</comment>
<comment type="catalytic activity">
    <reaction evidence="1">
        <text>L-glutamine + H2O = L-glutamate + NH4(+)</text>
        <dbReference type="Rhea" id="RHEA:15889"/>
        <dbReference type="ChEBI" id="CHEBI:15377"/>
        <dbReference type="ChEBI" id="CHEBI:28938"/>
        <dbReference type="ChEBI" id="CHEBI:29985"/>
        <dbReference type="ChEBI" id="CHEBI:58359"/>
    </reaction>
</comment>
<comment type="catalytic activity">
    <reaction evidence="1">
        <text>UTP + NH4(+) + ATP = CTP + ADP + phosphate + 2 H(+)</text>
        <dbReference type="Rhea" id="RHEA:16597"/>
        <dbReference type="ChEBI" id="CHEBI:15378"/>
        <dbReference type="ChEBI" id="CHEBI:28938"/>
        <dbReference type="ChEBI" id="CHEBI:30616"/>
        <dbReference type="ChEBI" id="CHEBI:37563"/>
        <dbReference type="ChEBI" id="CHEBI:43474"/>
        <dbReference type="ChEBI" id="CHEBI:46398"/>
        <dbReference type="ChEBI" id="CHEBI:456216"/>
    </reaction>
</comment>
<comment type="activity regulation">
    <text evidence="1">Allosterically activated by GTP, when glutamine is the substrate; GTP has no effect on the reaction when ammonia is the substrate. The allosteric effector GTP functions by stabilizing the protein conformation that binds the tetrahedral intermediate(s) formed during glutamine hydrolysis. Inhibited by the product CTP, via allosteric rather than competitive inhibition.</text>
</comment>
<comment type="pathway">
    <text evidence="1">Pyrimidine metabolism; CTP biosynthesis via de novo pathway; CTP from UDP: step 2/2.</text>
</comment>
<comment type="subunit">
    <text evidence="1">Homotetramer.</text>
</comment>
<comment type="miscellaneous">
    <text evidence="1">CTPSs have evolved a hybrid strategy for distinguishing between UTP and CTP. The overlapping regions of the product feedback inhibitory and substrate sites recognize a common feature in both compounds, the triphosphate moiety. To differentiate isosteric substrate and product pyrimidine rings, an additional pocket far from the expected kinase/ligase catalytic site, specifically recognizes the cytosine and ribose portions of the product inhibitor.</text>
</comment>
<comment type="similarity">
    <text evidence="1">Belongs to the CTP synthase family.</text>
</comment>